<gene>
    <name type="primary">divK</name>
    <name type="ordered locus">Oant_3678</name>
</gene>
<protein>
    <recommendedName>
        <fullName>Polar-differentiation response regulator DivK</fullName>
    </recommendedName>
</protein>
<sequence>MPKSVMIVEDNELNMKLFRDLIEASGYETIRTRNGLEALDLAREHRPDLILMDIQLPEVSGLEVTKWLKDDDELRHIPVIAVTAFAMKGDEERIRQGGCEAYISKPISVPRFIETIKSYLGDA</sequence>
<organism>
    <name type="scientific">Brucella anthropi (strain ATCC 49188 / DSM 6882 / CCUG 24695 / JCM 21032 / LMG 3331 / NBRC 15819 / NCTC 12168 / Alc 37)</name>
    <name type="common">Ochrobactrum anthropi</name>
    <dbReference type="NCBI Taxonomy" id="439375"/>
    <lineage>
        <taxon>Bacteria</taxon>
        <taxon>Pseudomonadati</taxon>
        <taxon>Pseudomonadota</taxon>
        <taxon>Alphaproteobacteria</taxon>
        <taxon>Hyphomicrobiales</taxon>
        <taxon>Brucellaceae</taxon>
        <taxon>Brucella/Ochrobactrum group</taxon>
        <taxon>Brucella</taxon>
    </lineage>
</organism>
<evidence type="ECO:0000250" key="1"/>
<evidence type="ECO:0000255" key="2">
    <source>
        <dbReference type="PROSITE-ProRule" id="PRU00169"/>
    </source>
</evidence>
<dbReference type="EMBL" id="CP000759">
    <property type="protein sequence ID" value="ABS16384.1"/>
    <property type="molecule type" value="Genomic_DNA"/>
</dbReference>
<dbReference type="RefSeq" id="WP_010658876.1">
    <property type="nucleotide sequence ID" value="NC_009668.1"/>
</dbReference>
<dbReference type="SMR" id="A6X580"/>
<dbReference type="STRING" id="439375.Oant_3678"/>
<dbReference type="KEGG" id="oan:Oant_3678"/>
<dbReference type="eggNOG" id="COG0784">
    <property type="taxonomic scope" value="Bacteria"/>
</dbReference>
<dbReference type="HOGENOM" id="CLU_000445_69_17_5"/>
<dbReference type="PhylomeDB" id="A6X580"/>
<dbReference type="Proteomes" id="UP000002301">
    <property type="component" value="Chromosome 2"/>
</dbReference>
<dbReference type="GO" id="GO:0005737">
    <property type="term" value="C:cytoplasm"/>
    <property type="evidence" value="ECO:0007669"/>
    <property type="project" value="UniProtKB-SubCell"/>
</dbReference>
<dbReference type="GO" id="GO:0003677">
    <property type="term" value="F:DNA binding"/>
    <property type="evidence" value="ECO:0007669"/>
    <property type="project" value="UniProtKB-KW"/>
</dbReference>
<dbReference type="GO" id="GO:0000160">
    <property type="term" value="P:phosphorelay signal transduction system"/>
    <property type="evidence" value="ECO:0007669"/>
    <property type="project" value="UniProtKB-KW"/>
</dbReference>
<dbReference type="CDD" id="cd17548">
    <property type="entry name" value="REC_DivK-like"/>
    <property type="match status" value="1"/>
</dbReference>
<dbReference type="Gene3D" id="3.40.50.2300">
    <property type="match status" value="1"/>
</dbReference>
<dbReference type="InterPro" id="IPR050595">
    <property type="entry name" value="Bact_response_regulator"/>
</dbReference>
<dbReference type="InterPro" id="IPR011006">
    <property type="entry name" value="CheY-like_superfamily"/>
</dbReference>
<dbReference type="InterPro" id="IPR001789">
    <property type="entry name" value="Sig_transdc_resp-reg_receiver"/>
</dbReference>
<dbReference type="PANTHER" id="PTHR44591:SF3">
    <property type="entry name" value="RESPONSE REGULATORY DOMAIN-CONTAINING PROTEIN"/>
    <property type="match status" value="1"/>
</dbReference>
<dbReference type="PANTHER" id="PTHR44591">
    <property type="entry name" value="STRESS RESPONSE REGULATOR PROTEIN 1"/>
    <property type="match status" value="1"/>
</dbReference>
<dbReference type="Pfam" id="PF00072">
    <property type="entry name" value="Response_reg"/>
    <property type="match status" value="1"/>
</dbReference>
<dbReference type="SMART" id="SM00448">
    <property type="entry name" value="REC"/>
    <property type="match status" value="1"/>
</dbReference>
<dbReference type="SUPFAM" id="SSF52172">
    <property type="entry name" value="CheY-like"/>
    <property type="match status" value="1"/>
</dbReference>
<dbReference type="PROSITE" id="PS50110">
    <property type="entry name" value="RESPONSE_REGULATORY"/>
    <property type="match status" value="1"/>
</dbReference>
<reference key="1">
    <citation type="journal article" date="2011" name="J. Bacteriol.">
        <title>Genome of Ochrobactrum anthropi ATCC 49188 T, a versatile opportunistic pathogen and symbiont of several eukaryotic hosts.</title>
        <authorList>
            <person name="Chain P.S."/>
            <person name="Lang D.M."/>
            <person name="Comerci D.J."/>
            <person name="Malfatti S.A."/>
            <person name="Vergez L.M."/>
            <person name="Shin M."/>
            <person name="Ugalde R.A."/>
            <person name="Garcia E."/>
            <person name="Tolmasky M.E."/>
        </authorList>
    </citation>
    <scope>NUCLEOTIDE SEQUENCE [LARGE SCALE GENOMIC DNA]</scope>
    <source>
        <strain>ATCC 49188 / DSM 6882 / CCUG 24695 / JCM 21032 / LMG 3331 / NBRC 15819 / NCTC 12168 / Alc 37</strain>
    </source>
</reference>
<comment type="function">
    <text evidence="1">Essential protein that is involved in the control of cell division, probably through the regulation of ctrA. Its phosphorylation status is regulated by PdhS (By similarity).</text>
</comment>
<comment type="subunit">
    <text evidence="1">Interacts with DivL, PleC, DivJ and PdhS.</text>
</comment>
<comment type="subcellular location">
    <subcellularLocation>
        <location evidence="1">Cytoplasm</location>
    </subcellularLocation>
    <text evidence="1">Localized at one pole of the cell. Colocalizes with PdhS (By similarity).</text>
</comment>
<feature type="chain" id="PRO_0000363212" description="Polar-differentiation response regulator DivK">
    <location>
        <begin position="1"/>
        <end position="123"/>
    </location>
</feature>
<feature type="domain" description="Response regulatory" evidence="2">
    <location>
        <begin position="4"/>
        <end position="120"/>
    </location>
</feature>
<feature type="modified residue" description="4-aspartylphosphate" evidence="2">
    <location>
        <position position="53"/>
    </location>
</feature>
<accession>A6X580</accession>
<name>DIVK_BRUA4</name>
<proteinExistence type="inferred from homology"/>
<keyword id="KW-0963">Cytoplasm</keyword>
<keyword id="KW-0238">DNA-binding</keyword>
<keyword id="KW-0597">Phosphoprotein</keyword>
<keyword id="KW-1185">Reference proteome</keyword>
<keyword id="KW-0804">Transcription</keyword>
<keyword id="KW-0805">Transcription regulation</keyword>
<keyword id="KW-0902">Two-component regulatory system</keyword>